<organism>
    <name type="scientific">Hyphomonas neptunium (strain ATCC 15444)</name>
    <dbReference type="NCBI Taxonomy" id="228405"/>
    <lineage>
        <taxon>Bacteria</taxon>
        <taxon>Pseudomonadati</taxon>
        <taxon>Pseudomonadota</taxon>
        <taxon>Alphaproteobacteria</taxon>
        <taxon>Hyphomonadales</taxon>
        <taxon>Hyphomonadaceae</taxon>
        <taxon>Hyphomonas</taxon>
    </lineage>
</organism>
<name>ILVD_HYPNA</name>
<sequence length="613" mass="65327">MIPYRSRTSTHGRNMAGARGLWRATGMTDSDFGKPIIAVVNSFTQFVPGHVHLKDLGQLVAREIEAAGGVAKEFNTIAVDDGIAMGHDGMLYSLPSREIIADSVEYMVNAHCADAMVCISNCDKITPGMMMAAMRLDIPVVFVSGGPMEAGKVNIDGELRAVDLIDAMIEAANPDRTDAEVDEFEKNACPTCGSCSGMFTANSMNCLAEALGLALPGNGSTLATHADREALFRRAGRRIVELTKAYYEGGDTGVSARGIATKAAFENAITLDIAMGGSTNTILHLLAMAREGEVDFTLADIDRLSRVTPCLCKVAPAVQNVHMEDVHRAGGIFGILGELGRAGKLDTSVRTIHEDTMAEALSKWDIAVTNNPEVQELFLAAPGGVRTTQAFSQARRYKDLDTDREKGVIRSAKHAFSKDGGLAVLFGNIAEMGCVVKTAGVDDSILKFSGPAVICESQEEACERILKKRVKAGDVVIIRYEGPRGGPGMQEMLYPTSYLKAMQLGKECALITDGRFSGGTSGLSIGHVSPEAAEGGAIGLLHEGDIIEIDIPNRTINAKVSAEEFAKRRAEMDAKGAAAWKPVEERPRKVSRALKVYAAHVGNASLGAVRLDP</sequence>
<dbReference type="EC" id="4.2.1.9" evidence="1"/>
<dbReference type="EMBL" id="CP000158">
    <property type="protein sequence ID" value="ABI75636.1"/>
    <property type="molecule type" value="Genomic_DNA"/>
</dbReference>
<dbReference type="RefSeq" id="WP_011646428.1">
    <property type="nucleotide sequence ID" value="NC_008358.1"/>
</dbReference>
<dbReference type="SMR" id="Q0C2B5"/>
<dbReference type="STRING" id="228405.HNE_1411"/>
<dbReference type="KEGG" id="hne:HNE_1411"/>
<dbReference type="eggNOG" id="COG0129">
    <property type="taxonomic scope" value="Bacteria"/>
</dbReference>
<dbReference type="HOGENOM" id="CLU_014271_4_2_5"/>
<dbReference type="UniPathway" id="UPA00047">
    <property type="reaction ID" value="UER00057"/>
</dbReference>
<dbReference type="UniPathway" id="UPA00049">
    <property type="reaction ID" value="UER00061"/>
</dbReference>
<dbReference type="Proteomes" id="UP000001959">
    <property type="component" value="Chromosome"/>
</dbReference>
<dbReference type="GO" id="GO:0005829">
    <property type="term" value="C:cytosol"/>
    <property type="evidence" value="ECO:0007669"/>
    <property type="project" value="TreeGrafter"/>
</dbReference>
<dbReference type="GO" id="GO:0051537">
    <property type="term" value="F:2 iron, 2 sulfur cluster binding"/>
    <property type="evidence" value="ECO:0007669"/>
    <property type="project" value="UniProtKB-UniRule"/>
</dbReference>
<dbReference type="GO" id="GO:0004160">
    <property type="term" value="F:dihydroxy-acid dehydratase activity"/>
    <property type="evidence" value="ECO:0007669"/>
    <property type="project" value="UniProtKB-UniRule"/>
</dbReference>
<dbReference type="GO" id="GO:0000287">
    <property type="term" value="F:magnesium ion binding"/>
    <property type="evidence" value="ECO:0007669"/>
    <property type="project" value="UniProtKB-UniRule"/>
</dbReference>
<dbReference type="GO" id="GO:0009097">
    <property type="term" value="P:isoleucine biosynthetic process"/>
    <property type="evidence" value="ECO:0007669"/>
    <property type="project" value="UniProtKB-UniRule"/>
</dbReference>
<dbReference type="GO" id="GO:0009099">
    <property type="term" value="P:L-valine biosynthetic process"/>
    <property type="evidence" value="ECO:0007669"/>
    <property type="project" value="UniProtKB-UniRule"/>
</dbReference>
<dbReference type="FunFam" id="3.50.30.80:FF:000001">
    <property type="entry name" value="Dihydroxy-acid dehydratase"/>
    <property type="match status" value="1"/>
</dbReference>
<dbReference type="Gene3D" id="3.50.30.80">
    <property type="entry name" value="IlvD/EDD C-terminal domain-like"/>
    <property type="match status" value="1"/>
</dbReference>
<dbReference type="HAMAP" id="MF_00012">
    <property type="entry name" value="IlvD"/>
    <property type="match status" value="1"/>
</dbReference>
<dbReference type="InterPro" id="IPR042096">
    <property type="entry name" value="Dihydro-acid_dehy_C"/>
</dbReference>
<dbReference type="InterPro" id="IPR004404">
    <property type="entry name" value="DihydroxyA_deHydtase"/>
</dbReference>
<dbReference type="InterPro" id="IPR020558">
    <property type="entry name" value="DiOHA_6PGluconate_deHydtase_CS"/>
</dbReference>
<dbReference type="InterPro" id="IPR056740">
    <property type="entry name" value="ILV_EDD_C"/>
</dbReference>
<dbReference type="InterPro" id="IPR000581">
    <property type="entry name" value="ILV_EDD_N"/>
</dbReference>
<dbReference type="InterPro" id="IPR037237">
    <property type="entry name" value="IlvD/EDD_N"/>
</dbReference>
<dbReference type="NCBIfam" id="TIGR00110">
    <property type="entry name" value="ilvD"/>
    <property type="match status" value="1"/>
</dbReference>
<dbReference type="NCBIfam" id="NF009103">
    <property type="entry name" value="PRK12448.1"/>
    <property type="match status" value="1"/>
</dbReference>
<dbReference type="PANTHER" id="PTHR43661">
    <property type="entry name" value="D-XYLONATE DEHYDRATASE"/>
    <property type="match status" value="1"/>
</dbReference>
<dbReference type="PANTHER" id="PTHR43661:SF3">
    <property type="entry name" value="D-XYLONATE DEHYDRATASE YAGF-RELATED"/>
    <property type="match status" value="1"/>
</dbReference>
<dbReference type="Pfam" id="PF24877">
    <property type="entry name" value="ILV_EDD_C"/>
    <property type="match status" value="1"/>
</dbReference>
<dbReference type="Pfam" id="PF00920">
    <property type="entry name" value="ILVD_EDD_N"/>
    <property type="match status" value="1"/>
</dbReference>
<dbReference type="SUPFAM" id="SSF143975">
    <property type="entry name" value="IlvD/EDD N-terminal domain-like"/>
    <property type="match status" value="1"/>
</dbReference>
<dbReference type="SUPFAM" id="SSF52016">
    <property type="entry name" value="LeuD/IlvD-like"/>
    <property type="match status" value="1"/>
</dbReference>
<dbReference type="PROSITE" id="PS00886">
    <property type="entry name" value="ILVD_EDD_1"/>
    <property type="match status" value="1"/>
</dbReference>
<dbReference type="PROSITE" id="PS00887">
    <property type="entry name" value="ILVD_EDD_2"/>
    <property type="match status" value="1"/>
</dbReference>
<proteinExistence type="inferred from homology"/>
<feature type="chain" id="PRO_1000000993" description="Dihydroxy-acid dehydratase">
    <location>
        <begin position="1"/>
        <end position="613"/>
    </location>
</feature>
<feature type="active site" description="Proton acceptor" evidence="1">
    <location>
        <position position="517"/>
    </location>
</feature>
<feature type="binding site" evidence="1">
    <location>
        <position position="81"/>
    </location>
    <ligand>
        <name>Mg(2+)</name>
        <dbReference type="ChEBI" id="CHEBI:18420"/>
    </ligand>
</feature>
<feature type="binding site" evidence="1">
    <location>
        <position position="122"/>
    </location>
    <ligand>
        <name>[2Fe-2S] cluster</name>
        <dbReference type="ChEBI" id="CHEBI:190135"/>
    </ligand>
</feature>
<feature type="binding site" evidence="1">
    <location>
        <position position="123"/>
    </location>
    <ligand>
        <name>Mg(2+)</name>
        <dbReference type="ChEBI" id="CHEBI:18420"/>
    </ligand>
</feature>
<feature type="binding site" description="via carbamate group" evidence="1">
    <location>
        <position position="124"/>
    </location>
    <ligand>
        <name>Mg(2+)</name>
        <dbReference type="ChEBI" id="CHEBI:18420"/>
    </ligand>
</feature>
<feature type="binding site" evidence="1">
    <location>
        <position position="195"/>
    </location>
    <ligand>
        <name>[2Fe-2S] cluster</name>
        <dbReference type="ChEBI" id="CHEBI:190135"/>
    </ligand>
</feature>
<feature type="binding site" evidence="1">
    <location>
        <position position="491"/>
    </location>
    <ligand>
        <name>Mg(2+)</name>
        <dbReference type="ChEBI" id="CHEBI:18420"/>
    </ligand>
</feature>
<feature type="modified residue" description="N6-carboxylysine" evidence="1">
    <location>
        <position position="124"/>
    </location>
</feature>
<comment type="function">
    <text evidence="1">Functions in the biosynthesis of branched-chain amino acids. Catalyzes the dehydration of (2R,3R)-2,3-dihydroxy-3-methylpentanoate (2,3-dihydroxy-3-methylvalerate) into 2-oxo-3-methylpentanoate (2-oxo-3-methylvalerate) and of (2R)-2,3-dihydroxy-3-methylbutanoate (2,3-dihydroxyisovalerate) into 2-oxo-3-methylbutanoate (2-oxoisovalerate), the penultimate precursor to L-isoleucine and L-valine, respectively.</text>
</comment>
<comment type="catalytic activity">
    <reaction evidence="1">
        <text>(2R)-2,3-dihydroxy-3-methylbutanoate = 3-methyl-2-oxobutanoate + H2O</text>
        <dbReference type="Rhea" id="RHEA:24809"/>
        <dbReference type="ChEBI" id="CHEBI:11851"/>
        <dbReference type="ChEBI" id="CHEBI:15377"/>
        <dbReference type="ChEBI" id="CHEBI:49072"/>
        <dbReference type="EC" id="4.2.1.9"/>
    </reaction>
    <physiologicalReaction direction="left-to-right" evidence="1">
        <dbReference type="Rhea" id="RHEA:24810"/>
    </physiologicalReaction>
</comment>
<comment type="catalytic activity">
    <reaction evidence="1">
        <text>(2R,3R)-2,3-dihydroxy-3-methylpentanoate = (S)-3-methyl-2-oxopentanoate + H2O</text>
        <dbReference type="Rhea" id="RHEA:27694"/>
        <dbReference type="ChEBI" id="CHEBI:15377"/>
        <dbReference type="ChEBI" id="CHEBI:35146"/>
        <dbReference type="ChEBI" id="CHEBI:49258"/>
        <dbReference type="EC" id="4.2.1.9"/>
    </reaction>
    <physiologicalReaction direction="left-to-right" evidence="1">
        <dbReference type="Rhea" id="RHEA:27695"/>
    </physiologicalReaction>
</comment>
<comment type="cofactor">
    <cofactor evidence="1">
        <name>[2Fe-2S] cluster</name>
        <dbReference type="ChEBI" id="CHEBI:190135"/>
    </cofactor>
    <text evidence="1">Binds 1 [2Fe-2S] cluster per subunit. This cluster acts as a Lewis acid cofactor.</text>
</comment>
<comment type="cofactor">
    <cofactor evidence="1">
        <name>Mg(2+)</name>
        <dbReference type="ChEBI" id="CHEBI:18420"/>
    </cofactor>
</comment>
<comment type="pathway">
    <text evidence="1">Amino-acid biosynthesis; L-isoleucine biosynthesis; L-isoleucine from 2-oxobutanoate: step 3/4.</text>
</comment>
<comment type="pathway">
    <text evidence="1">Amino-acid biosynthesis; L-valine biosynthesis; L-valine from pyruvate: step 3/4.</text>
</comment>
<comment type="subunit">
    <text evidence="1">Homodimer.</text>
</comment>
<comment type="similarity">
    <text evidence="1">Belongs to the IlvD/Edd family.</text>
</comment>
<accession>Q0C2B5</accession>
<reference key="1">
    <citation type="journal article" date="2006" name="J. Bacteriol.">
        <title>Comparative genomic evidence for a close relationship between the dimorphic prosthecate bacteria Hyphomonas neptunium and Caulobacter crescentus.</title>
        <authorList>
            <person name="Badger J.H."/>
            <person name="Hoover T.R."/>
            <person name="Brun Y.V."/>
            <person name="Weiner R.M."/>
            <person name="Laub M.T."/>
            <person name="Alexandre G."/>
            <person name="Mrazek J."/>
            <person name="Ren Q."/>
            <person name="Paulsen I.T."/>
            <person name="Nelson K.E."/>
            <person name="Khouri H.M."/>
            <person name="Radune D."/>
            <person name="Sosa J."/>
            <person name="Dodson R.J."/>
            <person name="Sullivan S.A."/>
            <person name="Rosovitz M.J."/>
            <person name="Madupu R."/>
            <person name="Brinkac L.M."/>
            <person name="Durkin A.S."/>
            <person name="Daugherty S.C."/>
            <person name="Kothari S.P."/>
            <person name="Giglio M.G."/>
            <person name="Zhou L."/>
            <person name="Haft D.H."/>
            <person name="Selengut J.D."/>
            <person name="Davidsen T.M."/>
            <person name="Yang Q."/>
            <person name="Zafar N."/>
            <person name="Ward N.L."/>
        </authorList>
    </citation>
    <scope>NUCLEOTIDE SEQUENCE [LARGE SCALE GENOMIC DNA]</scope>
    <source>
        <strain>ATCC 15444</strain>
    </source>
</reference>
<protein>
    <recommendedName>
        <fullName evidence="1">Dihydroxy-acid dehydratase</fullName>
        <shortName evidence="1">DAD</shortName>
        <ecNumber evidence="1">4.2.1.9</ecNumber>
    </recommendedName>
</protein>
<gene>
    <name evidence="1" type="primary">ilvD</name>
    <name type="ordered locus">HNE_1411</name>
</gene>
<keyword id="KW-0001">2Fe-2S</keyword>
<keyword id="KW-0028">Amino-acid biosynthesis</keyword>
<keyword id="KW-0100">Branched-chain amino acid biosynthesis</keyword>
<keyword id="KW-0408">Iron</keyword>
<keyword id="KW-0411">Iron-sulfur</keyword>
<keyword id="KW-0456">Lyase</keyword>
<keyword id="KW-0460">Magnesium</keyword>
<keyword id="KW-0479">Metal-binding</keyword>
<keyword id="KW-1185">Reference proteome</keyword>
<evidence type="ECO:0000255" key="1">
    <source>
        <dbReference type="HAMAP-Rule" id="MF_00012"/>
    </source>
</evidence>